<organism>
    <name type="scientific">Clavispora lusitaniae (strain ATCC 42720)</name>
    <name type="common">Yeast</name>
    <name type="synonym">Candida lusitaniae</name>
    <dbReference type="NCBI Taxonomy" id="306902"/>
    <lineage>
        <taxon>Eukaryota</taxon>
        <taxon>Fungi</taxon>
        <taxon>Dikarya</taxon>
        <taxon>Ascomycota</taxon>
        <taxon>Saccharomycotina</taxon>
        <taxon>Pichiomycetes</taxon>
        <taxon>Metschnikowiaceae</taxon>
        <taxon>Clavispora</taxon>
    </lineage>
</organism>
<reference key="1">
    <citation type="journal article" date="2003" name="Antimicrob. Agents Chemother.">
        <title>Disruption of ergosterol biosynthesis confers resistance to amphotericin B in Candida lusitaniae.</title>
        <authorList>
            <person name="Young L.Y."/>
            <person name="Hull C.M."/>
            <person name="Heitman J."/>
        </authorList>
    </citation>
    <scope>NUCLEOTIDE SEQUENCE [GENOMIC DNA]</scope>
</reference>
<reference key="2">
    <citation type="journal article" date="2009" name="Nature">
        <title>Evolution of pathogenicity and sexual reproduction in eight Candida genomes.</title>
        <authorList>
            <person name="Butler G."/>
            <person name="Rasmussen M.D."/>
            <person name="Lin M.F."/>
            <person name="Santos M.A.S."/>
            <person name="Sakthikumar S."/>
            <person name="Munro C.A."/>
            <person name="Rheinbay E."/>
            <person name="Grabherr M."/>
            <person name="Forche A."/>
            <person name="Reedy J.L."/>
            <person name="Agrafioti I."/>
            <person name="Arnaud M.B."/>
            <person name="Bates S."/>
            <person name="Brown A.J.P."/>
            <person name="Brunke S."/>
            <person name="Costanzo M.C."/>
            <person name="Fitzpatrick D.A."/>
            <person name="de Groot P.W.J."/>
            <person name="Harris D."/>
            <person name="Hoyer L.L."/>
            <person name="Hube B."/>
            <person name="Klis F.M."/>
            <person name="Kodira C."/>
            <person name="Lennard N."/>
            <person name="Logue M.E."/>
            <person name="Martin R."/>
            <person name="Neiman A.M."/>
            <person name="Nikolaou E."/>
            <person name="Quail M.A."/>
            <person name="Quinn J."/>
            <person name="Santos M.C."/>
            <person name="Schmitzberger F.F."/>
            <person name="Sherlock G."/>
            <person name="Shah P."/>
            <person name="Silverstein K.A.T."/>
            <person name="Skrzypek M.S."/>
            <person name="Soll D."/>
            <person name="Staggs R."/>
            <person name="Stansfield I."/>
            <person name="Stumpf M.P.H."/>
            <person name="Sudbery P.E."/>
            <person name="Srikantha T."/>
            <person name="Zeng Q."/>
            <person name="Berman J."/>
            <person name="Berriman M."/>
            <person name="Heitman J."/>
            <person name="Gow N.A.R."/>
            <person name="Lorenz M.C."/>
            <person name="Birren B.W."/>
            <person name="Kellis M."/>
            <person name="Cuomo C.A."/>
        </authorList>
    </citation>
    <scope>NUCLEOTIDE SEQUENCE [LARGE SCALE GENOMIC DNA]</scope>
    <source>
        <strain>ATCC 42720</strain>
    </source>
</reference>
<proteinExistence type="inferred from homology"/>
<name>ERG6_CLAL4</name>
<sequence length="375" mass="42698">MTSVKLAEKNFEQDKEFAKAMHGDSYKKRGISALMAKAKEASDVATNGYFKHWDGGVSEDDEKKRLDDYSSLTKNYYNLVTDFYEYGWGSSFHFSRYYKGEAFRQATARHEHFLAHKMNINENMRVLDVGCGVGGPGREICRFTDCTIVGLNNNDYQVERAQYYAKKYKLDDKLSYVKGDFMQMDFEPESFDAVYAIEATVHAPVLEGVYSEIYKVLKPGGVFGVYEWVMTDKYDENNEEHRKIAYGIEVGDGIPKMYKREVAEQALKNVGFDIEYEKDLADVNDEIPWYYPLAGEWKYVQTLSDCFTIFRTSKIGRTVTTNVVGLMEKIGLAPKGSKQVTGALEDAAVNLVAGGEQKLFTPMMLYIARKPLDAK</sequence>
<dbReference type="EC" id="2.1.1.41"/>
<dbReference type="EMBL" id="AY179503">
    <property type="protein sequence ID" value="AAO21936.1"/>
    <property type="molecule type" value="Genomic_DNA"/>
</dbReference>
<dbReference type="EMBL" id="CH408078">
    <property type="protein sequence ID" value="EEQ38547.1"/>
    <property type="molecule type" value="Genomic_DNA"/>
</dbReference>
<dbReference type="RefSeq" id="XP_002617229.1">
    <property type="nucleotide sequence ID" value="XM_002617183.1"/>
</dbReference>
<dbReference type="SMR" id="Q875K1"/>
<dbReference type="FunCoup" id="Q875K1">
    <property type="interactions" value="305"/>
</dbReference>
<dbReference type="STRING" id="306902.Q875K1"/>
<dbReference type="GeneID" id="8497819"/>
<dbReference type="KEGG" id="clu:CLUG_02673"/>
<dbReference type="VEuPathDB" id="FungiDB:CLUG_02673"/>
<dbReference type="HOGENOM" id="CLU_039068_5_3_1"/>
<dbReference type="InParanoid" id="Q875K1"/>
<dbReference type="OMA" id="AFNKAMH"/>
<dbReference type="OrthoDB" id="63253at4891"/>
<dbReference type="UniPathway" id="UPA00768">
    <property type="reaction ID" value="UER00760"/>
</dbReference>
<dbReference type="Proteomes" id="UP000007703">
    <property type="component" value="Unassembled WGS sequence"/>
</dbReference>
<dbReference type="GO" id="GO:0005783">
    <property type="term" value="C:endoplasmic reticulum"/>
    <property type="evidence" value="ECO:0007669"/>
    <property type="project" value="TreeGrafter"/>
</dbReference>
<dbReference type="GO" id="GO:0003838">
    <property type="term" value="F:sterol 24-C-methyltransferase activity"/>
    <property type="evidence" value="ECO:0007669"/>
    <property type="project" value="UniProtKB-EC"/>
</dbReference>
<dbReference type="GO" id="GO:0006696">
    <property type="term" value="P:ergosterol biosynthetic process"/>
    <property type="evidence" value="ECO:0007669"/>
    <property type="project" value="EnsemblFungi"/>
</dbReference>
<dbReference type="GO" id="GO:0032259">
    <property type="term" value="P:methylation"/>
    <property type="evidence" value="ECO:0007669"/>
    <property type="project" value="UniProtKB-KW"/>
</dbReference>
<dbReference type="CDD" id="cd02440">
    <property type="entry name" value="AdoMet_MTases"/>
    <property type="match status" value="1"/>
</dbReference>
<dbReference type="FunFam" id="3.40.50.150:FF:000121">
    <property type="entry name" value="Sterol 24-C-methyltransferase"/>
    <property type="match status" value="1"/>
</dbReference>
<dbReference type="Gene3D" id="3.40.50.150">
    <property type="entry name" value="Vaccinia Virus protein VP39"/>
    <property type="match status" value="1"/>
</dbReference>
<dbReference type="InterPro" id="IPR050447">
    <property type="entry name" value="Erg6_SMT_methyltransf"/>
</dbReference>
<dbReference type="InterPro" id="IPR013216">
    <property type="entry name" value="Methyltransf_11"/>
</dbReference>
<dbReference type="InterPro" id="IPR030384">
    <property type="entry name" value="MeTrfase_SMT"/>
</dbReference>
<dbReference type="InterPro" id="IPR029063">
    <property type="entry name" value="SAM-dependent_MTases_sf"/>
</dbReference>
<dbReference type="InterPro" id="IPR013705">
    <property type="entry name" value="Sterol_MeTrfase_C"/>
</dbReference>
<dbReference type="PANTHER" id="PTHR44068:SF1">
    <property type="entry name" value="HYPOTHETICAL LOC100005854"/>
    <property type="match status" value="1"/>
</dbReference>
<dbReference type="PANTHER" id="PTHR44068">
    <property type="entry name" value="ZGC:194242"/>
    <property type="match status" value="1"/>
</dbReference>
<dbReference type="Pfam" id="PF08241">
    <property type="entry name" value="Methyltransf_11"/>
    <property type="match status" value="1"/>
</dbReference>
<dbReference type="Pfam" id="PF08498">
    <property type="entry name" value="Sterol_MT_C"/>
    <property type="match status" value="1"/>
</dbReference>
<dbReference type="SUPFAM" id="SSF53335">
    <property type="entry name" value="S-adenosyl-L-methionine-dependent methyltransferases"/>
    <property type="match status" value="1"/>
</dbReference>
<dbReference type="PROSITE" id="PS51685">
    <property type="entry name" value="SAM_MT_ERG6_SMT"/>
    <property type="match status" value="1"/>
</dbReference>
<evidence type="ECO:0000250" key="1"/>
<evidence type="ECO:0000255" key="2">
    <source>
        <dbReference type="PROSITE-ProRule" id="PRU01022"/>
    </source>
</evidence>
<accession>Q875K1</accession>
<accession>C4Y2B0</accession>
<feature type="chain" id="PRO_0000124791" description="Sterol 24-C-methyltransferase">
    <location>
        <begin position="1"/>
        <end position="375"/>
    </location>
</feature>
<protein>
    <recommendedName>
        <fullName>Sterol 24-C-methyltransferase</fullName>
        <ecNumber>2.1.1.41</ecNumber>
    </recommendedName>
    <alternativeName>
        <fullName>Delta(24)-sterol C-methyltransferase</fullName>
    </alternativeName>
</protein>
<comment type="function">
    <text evidence="1">Catalyzes the methyl transfer from S-adenosyl-methionine to the C-24 of zymosterol to form fecosterol.</text>
</comment>
<comment type="catalytic activity">
    <reaction>
        <text>zymosterol + S-adenosyl-L-methionine = fecosterol + S-adenosyl-L-homocysteine + H(+)</text>
        <dbReference type="Rhea" id="RHEA:21128"/>
        <dbReference type="ChEBI" id="CHEBI:15378"/>
        <dbReference type="ChEBI" id="CHEBI:17038"/>
        <dbReference type="ChEBI" id="CHEBI:18252"/>
        <dbReference type="ChEBI" id="CHEBI:57856"/>
        <dbReference type="ChEBI" id="CHEBI:59789"/>
        <dbReference type="EC" id="2.1.1.41"/>
    </reaction>
</comment>
<comment type="pathway">
    <text>Steroid metabolism; ergosterol biosynthesis; ergosterol from zymosterol: step 1/5.</text>
</comment>
<comment type="similarity">
    <text evidence="2">Belongs to the class I-like SAM-binding methyltransferase superfamily. Erg6/SMT family.</text>
</comment>
<keyword id="KW-0444">Lipid biosynthesis</keyword>
<keyword id="KW-0443">Lipid metabolism</keyword>
<keyword id="KW-0489">Methyltransferase</keyword>
<keyword id="KW-1185">Reference proteome</keyword>
<keyword id="KW-0949">S-adenosyl-L-methionine</keyword>
<keyword id="KW-0752">Steroid biosynthesis</keyword>
<keyword id="KW-0753">Steroid metabolism</keyword>
<keyword id="KW-0756">Sterol biosynthesis</keyword>
<keyword id="KW-1207">Sterol metabolism</keyword>
<keyword id="KW-0808">Transferase</keyword>
<gene>
    <name type="primary">ERG6</name>
    <name type="ORF">CLUG_02673</name>
</gene>